<sequence>MLVARESLAEHYKEVEAFQTARAKSARRLSKIIAAVAAIAILGNVAQAFAIATMVPLSRLVPVYLWIRADGTVDSEVSISRLPATQEEAVVNASLWEYVRLRESYDADTAQYAYDLVSNFSAPTVRQDYQQFFNYPNPSSPQVILGKRGRVEVEHIASNDVTPSTQQIRYKRTLVVDGKMPVVSTWTATVRYEKVTSLPGRLRLTNPAGLVVTSYQTSEDTVSNVGQGAP</sequence>
<keyword id="KW-0997">Cell inner membrane</keyword>
<keyword id="KW-1003">Cell membrane</keyword>
<keyword id="KW-0192">Crown gall tumor</keyword>
<keyword id="KW-0472">Membrane</keyword>
<keyword id="KW-0614">Plasmid</keyword>
<keyword id="KW-0812">Transmembrane</keyword>
<keyword id="KW-1133">Transmembrane helix</keyword>
<protein>
    <recommendedName>
        <fullName>Protein virB8</fullName>
    </recommendedName>
</protein>
<geneLocation type="plasmid">
    <name>pTiA6</name>
</geneLocation>
<proteinExistence type="inferred from homology"/>
<comment type="function">
    <text>VirB proteins are suggested to act at the bacterial surface and there play an important role in directing T-DNA transfer to plant cells.</text>
</comment>
<comment type="subcellular location">
    <subcellularLocation>
        <location evidence="2">Cell inner membrane</location>
        <topology evidence="2">Single-pass membrane protein</topology>
    </subcellularLocation>
</comment>
<comment type="similarity">
    <text evidence="2">Belongs to the virB8 family.</text>
</comment>
<dbReference type="EMBL" id="J03216">
    <property type="status" value="NOT_ANNOTATED_CDS"/>
    <property type="molecule type" value="Genomic_DNA"/>
</dbReference>
<dbReference type="PIR" id="I28621">
    <property type="entry name" value="B8AGA6"/>
</dbReference>
<dbReference type="SMR" id="P09781"/>
<dbReference type="GO" id="GO:0005886">
    <property type="term" value="C:plasma membrane"/>
    <property type="evidence" value="ECO:0007669"/>
    <property type="project" value="UniProtKB-SubCell"/>
</dbReference>
<dbReference type="Gene3D" id="3.10.450.230">
    <property type="entry name" value="VirB8 protein"/>
    <property type="match status" value="1"/>
</dbReference>
<dbReference type="InterPro" id="IPR032710">
    <property type="entry name" value="NTF2-like_dom_sf"/>
</dbReference>
<dbReference type="InterPro" id="IPR007430">
    <property type="entry name" value="VirB8"/>
</dbReference>
<dbReference type="NCBIfam" id="NF010439">
    <property type="entry name" value="PRK13865.1"/>
    <property type="match status" value="1"/>
</dbReference>
<dbReference type="Pfam" id="PF04335">
    <property type="entry name" value="VirB8"/>
    <property type="match status" value="1"/>
</dbReference>
<dbReference type="SUPFAM" id="SSF54427">
    <property type="entry name" value="NTF2-like"/>
    <property type="match status" value="1"/>
</dbReference>
<accession>P09781</accession>
<feature type="chain" id="PRO_0000065845" description="Protein virB8">
    <location>
        <begin position="1"/>
        <end position="230"/>
    </location>
</feature>
<feature type="topological domain" description="Cytoplasmic" evidence="1">
    <location>
        <begin position="1"/>
        <end position="38"/>
    </location>
</feature>
<feature type="transmembrane region" description="Helical" evidence="1">
    <location>
        <begin position="39"/>
        <end position="61"/>
    </location>
</feature>
<feature type="topological domain" description="Periplasmic" evidence="1">
    <location>
        <begin position="62"/>
        <end position="230"/>
    </location>
</feature>
<name>VIRB8_RHIRD</name>
<organism>
    <name type="scientific">Rhizobium radiobacter</name>
    <name type="common">Agrobacterium tumefaciens</name>
    <name type="synonym">Agrobacterium radiobacter</name>
    <dbReference type="NCBI Taxonomy" id="358"/>
    <lineage>
        <taxon>Bacteria</taxon>
        <taxon>Pseudomonadati</taxon>
        <taxon>Pseudomonadota</taxon>
        <taxon>Alphaproteobacteria</taxon>
        <taxon>Hyphomicrobiales</taxon>
        <taxon>Rhizobiaceae</taxon>
        <taxon>Rhizobium/Agrobacterium group</taxon>
        <taxon>Agrobacterium</taxon>
        <taxon>Agrobacterium tumefaciens complex</taxon>
    </lineage>
</organism>
<gene>
    <name type="primary">virB8</name>
</gene>
<reference key="1">
    <citation type="journal article" date="1988" name="J. Biol. Chem.">
        <title>Characterization of the virB operon from an Agrobacterium tumefaciens Ti plasmid.</title>
        <authorList>
            <person name="Ward J.E."/>
            <person name="Akiyoshi D.E."/>
            <person name="Regier D."/>
            <person name="Datta A."/>
            <person name="Gordon M.P."/>
            <person name="Nester E.W."/>
        </authorList>
    </citation>
    <scope>NUCLEOTIDE SEQUENCE [GENOMIC DNA]</scope>
</reference>
<reference key="2">
    <citation type="journal article" date="1990" name="J. Biol. Chem.">
        <authorList>
            <person name="Ward J.E."/>
            <person name="Akiyoshi D.E."/>
            <person name="Regier D."/>
            <person name="Datta A."/>
            <person name="Gordon M.P."/>
            <person name="Nester E.W."/>
        </authorList>
    </citation>
    <scope>ERRATUM OF PUBMED:3281947</scope>
    <scope>SEQUENCE REVISION</scope>
</reference>
<evidence type="ECO:0000255" key="1"/>
<evidence type="ECO:0000305" key="2"/>